<reference key="1">
    <citation type="journal article" date="1992" name="J. Biol. Chem.">
        <title>The gene encoding Escherichia coli acyl carrier protein lies within a cluster of fatty acid biosynthetic genes.</title>
        <authorList>
            <person name="Rawlings M."/>
            <person name="Cronan J.E. Jr."/>
        </authorList>
    </citation>
    <scope>NUCLEOTIDE SEQUENCE [GENOMIC DNA]</scope>
    <source>
        <strain>K12</strain>
    </source>
</reference>
<reference key="2">
    <citation type="journal article" date="1993" name="Biochem. Soc. Trans.">
        <title>The cloning and overexpression of E. coli acyl carrier protein (ACP).</title>
        <authorList>
            <person name="Jones A.L."/>
            <person name="Kille P."/>
            <person name="Dancer J.E."/>
            <person name="Harwood J.L."/>
        </authorList>
    </citation>
    <scope>NUCLEOTIDE SEQUENCE [GENOMIC DNA]</scope>
</reference>
<reference key="3">
    <citation type="journal article" date="1996" name="DNA Res.">
        <title>A 718-kb DNA sequence of the Escherichia coli K-12 genome corresponding to the 12.7-28.0 min region on the linkage map.</title>
        <authorList>
            <person name="Oshima T."/>
            <person name="Aiba H."/>
            <person name="Baba T."/>
            <person name="Fujita K."/>
            <person name="Hayashi K."/>
            <person name="Honjo A."/>
            <person name="Ikemoto K."/>
            <person name="Inada T."/>
            <person name="Itoh T."/>
            <person name="Kajihara M."/>
            <person name="Kanai K."/>
            <person name="Kashimoto K."/>
            <person name="Kimura S."/>
            <person name="Kitagawa M."/>
            <person name="Makino K."/>
            <person name="Masuda S."/>
            <person name="Miki T."/>
            <person name="Mizobuchi K."/>
            <person name="Mori H."/>
            <person name="Motomura K."/>
            <person name="Nakamura Y."/>
            <person name="Nashimoto H."/>
            <person name="Nishio Y."/>
            <person name="Saito N."/>
            <person name="Sampei G."/>
            <person name="Seki Y."/>
            <person name="Tagami H."/>
            <person name="Takemoto K."/>
            <person name="Wada C."/>
            <person name="Yamamoto Y."/>
            <person name="Yano M."/>
            <person name="Horiuchi T."/>
        </authorList>
    </citation>
    <scope>NUCLEOTIDE SEQUENCE [LARGE SCALE GENOMIC DNA]</scope>
    <source>
        <strain>K12 / W3110 / ATCC 27325 / DSM 5911</strain>
    </source>
</reference>
<reference key="4">
    <citation type="journal article" date="1997" name="Science">
        <title>The complete genome sequence of Escherichia coli K-12.</title>
        <authorList>
            <person name="Blattner F.R."/>
            <person name="Plunkett G. III"/>
            <person name="Bloch C.A."/>
            <person name="Perna N.T."/>
            <person name="Burland V."/>
            <person name="Riley M."/>
            <person name="Collado-Vides J."/>
            <person name="Glasner J.D."/>
            <person name="Rode C.K."/>
            <person name="Mayhew G.F."/>
            <person name="Gregor J."/>
            <person name="Davis N.W."/>
            <person name="Kirkpatrick H.A."/>
            <person name="Goeden M.A."/>
            <person name="Rose D.J."/>
            <person name="Mau B."/>
            <person name="Shao Y."/>
        </authorList>
    </citation>
    <scope>NUCLEOTIDE SEQUENCE [LARGE SCALE GENOMIC DNA]</scope>
    <source>
        <strain>K12 / MG1655 / ATCC 47076</strain>
    </source>
</reference>
<reference key="5">
    <citation type="journal article" date="2006" name="Mol. Syst. Biol.">
        <title>Highly accurate genome sequences of Escherichia coli K-12 strains MG1655 and W3110.</title>
        <authorList>
            <person name="Hayashi K."/>
            <person name="Morooka N."/>
            <person name="Yamamoto Y."/>
            <person name="Fujita K."/>
            <person name="Isono K."/>
            <person name="Choi S."/>
            <person name="Ohtsubo E."/>
            <person name="Baba T."/>
            <person name="Wanner B.L."/>
            <person name="Mori H."/>
            <person name="Horiuchi T."/>
        </authorList>
    </citation>
    <scope>NUCLEOTIDE SEQUENCE [LARGE SCALE GENOMIC DNA]</scope>
    <source>
        <strain>K12 / W3110 / ATCC 27325 / DSM 5911</strain>
    </source>
</reference>
<reference key="6">
    <citation type="journal article" date="1968" name="J. Biol. Chem.">
        <title>The complete amino acid sequence of the acyl carrier protein of Escherichia coli.</title>
        <authorList>
            <person name="Vanaman T.C."/>
            <person name="Wakil S.J."/>
            <person name="Hill R.L."/>
        </authorList>
    </citation>
    <scope>PROTEIN SEQUENCE OF 2-78</scope>
    <scope>PHOSPHOPANTETHEINYLATION AT SER-37</scope>
    <source>
        <strain>K12 / E15</strain>
    </source>
</reference>
<reference key="7">
    <citation type="journal article" date="1987" name="J. Bacteriol.">
        <title>Altered molecular form of acyl carrier protein associated with beta-ketoacyl-acyl carrier protein synthase II (fabF) mutants.</title>
        <authorList>
            <person name="Jackowski S."/>
            <person name="Rock C.O."/>
        </authorList>
    </citation>
    <scope>PROTEIN SEQUENCE OF 2-78</scope>
    <source>
        <strain>K12</strain>
    </source>
</reference>
<reference key="8">
    <citation type="journal article" date="1991" name="Nature">
        <title>Activation of Escherichia coli prohaemolysin to the mature toxin by acyl carrier protein-dependent fatty acylation.</title>
        <authorList>
            <person name="Issartel J.P."/>
            <person name="Koronakis V."/>
            <person name="Hughes C."/>
        </authorList>
    </citation>
    <scope>PROTEIN SEQUENCE OF 2-21</scope>
</reference>
<reference key="9">
    <citation type="journal article" date="2010" name="Proc. Natl. Acad. Sci. U.S.A.">
        <title>Escherichia coli condensin MukB stimulates topoisomerase IV activity by a direct physical interaction.</title>
        <authorList>
            <person name="Li Y."/>
            <person name="Stewart N.K."/>
            <person name="Berger A.J."/>
            <person name="Vos S."/>
            <person name="Schoeffler A.J."/>
            <person name="Berger J.M."/>
            <person name="Chait B.T."/>
            <person name="Oakley M.G."/>
        </authorList>
    </citation>
    <scope>PROTEIN SEQUENCE OF 10-19 AND 63-78</scope>
    <scope>INTERACTION WITH MUKB</scope>
</reference>
<reference key="10">
    <citation type="journal article" date="1994" name="Proc. Natl. Acad. Sci. U.S.A.">
        <title>The fabJ-encoded beta-ketoacyl-[acyl carrier protein] synthase IV from Escherichia coli is sensitive to cerulenin and specific for short-chain substrates.</title>
        <authorList>
            <person name="Siggaard-Andersen M."/>
            <person name="Wissenbach M."/>
            <person name="Chuck J.-A."/>
            <person name="Svendsen I."/>
            <person name="Olsen J.G."/>
            <person name="von Wettstein-Knowles P.V."/>
        </authorList>
    </citation>
    <scope>NUCLEOTIDE SEQUENCE [GENOMIC DNA] OF 76-78</scope>
    <source>
        <strain>K12 / W3110 / ATCC 27325 / DSM 5911</strain>
    </source>
</reference>
<reference key="11">
    <citation type="journal article" date="1968" name="J. Biol. Chem.">
        <title>The preparation of tryptic, peptic, thermolysin, and cyanogen bromide peptides from the acyl carrier protein of Escherichia coli.</title>
        <authorList>
            <person name="Vanaman T.C."/>
            <person name="Wakil S.J."/>
            <person name="Hill R.L."/>
        </authorList>
    </citation>
    <scope>PARTIAL PROTEIN SEQUENCE</scope>
    <source>
        <strain>K12 / E15</strain>
    </source>
</reference>
<reference key="12">
    <citation type="journal article" date="1995" name="J. Biol. Chem.">
        <title>The unmodified (apo) form of Escherichia coli acyl carrier protein is a potent inhibitor of cell growth.</title>
        <authorList>
            <person name="Keating D.H."/>
            <person name="Rawlings Carey M."/>
            <person name="Cronan J.E. Jr."/>
        </authorList>
    </citation>
    <scope>MUTAGENESIS OF SER-37</scope>
</reference>
<reference key="13">
    <citation type="journal article" date="1988" name="Eur. J. Biochem.">
        <title>Three-dimensional structure of acyl carrier protein in solution determined by nuclear magnetic resonance and the combined use of dynamical simulated annealing and distance geometry.</title>
        <authorList>
            <person name="Holak T.A."/>
            <person name="Nilges M."/>
            <person name="Prestegard J.H."/>
            <person name="Gronenborn A.M."/>
            <person name="Clore G.M."/>
        </authorList>
    </citation>
    <scope>STRUCTURE BY NMR</scope>
</reference>
<reference key="14">
    <citation type="journal article" date="1988" name="Biochemistry">
        <title>Three-dimensional structure of acyl carrier protein determined by NMR pseudoenergy and distance geometry calculations.</title>
        <authorList>
            <person name="Holak T.A."/>
            <person name="Kearsley S.K."/>
            <person name="Kim Y."/>
            <person name="Prestegard J.H."/>
        </authorList>
    </citation>
    <scope>STRUCTURE BY NMR</scope>
</reference>
<reference key="15">
    <citation type="journal article" date="1990" name="Proteins">
        <title>Refinement of the NMR structures for acyl carrier protein with scalar coupling data.</title>
        <authorList>
            <person name="Kim Y."/>
            <person name="Prestegard J.H."/>
        </authorList>
    </citation>
    <scope>STRUCTURE BY NMR</scope>
</reference>
<protein>
    <recommendedName>
        <fullName evidence="1">Acyl carrier protein</fullName>
        <shortName evidence="1">ACP</shortName>
    </recommendedName>
    <alternativeName>
        <fullName>Cytosolic-activating factor</fullName>
        <shortName>CAF</shortName>
    </alternativeName>
    <alternativeName>
        <fullName>Fatty acid synthase acyl carrier protein</fullName>
    </alternativeName>
</protein>
<organism>
    <name type="scientific">Escherichia coli (strain K12)</name>
    <dbReference type="NCBI Taxonomy" id="83333"/>
    <lineage>
        <taxon>Bacteria</taxon>
        <taxon>Pseudomonadati</taxon>
        <taxon>Pseudomonadota</taxon>
        <taxon>Gammaproteobacteria</taxon>
        <taxon>Enterobacterales</taxon>
        <taxon>Enterobacteriaceae</taxon>
        <taxon>Escherichia</taxon>
    </lineage>
</organism>
<proteinExistence type="evidence at protein level"/>
<evidence type="ECO:0000255" key="1">
    <source>
        <dbReference type="HAMAP-Rule" id="MF_01217"/>
    </source>
</evidence>
<evidence type="ECO:0000255" key="2">
    <source>
        <dbReference type="PROSITE-ProRule" id="PRU00258"/>
    </source>
</evidence>
<evidence type="ECO:0000269" key="3">
    <source>
    </source>
</evidence>
<evidence type="ECO:0000269" key="4">
    <source>
    </source>
</evidence>
<evidence type="ECO:0000269" key="5">
    <source>
    </source>
</evidence>
<evidence type="ECO:0000269" key="6">
    <source>
    </source>
</evidence>
<evidence type="ECO:0000269" key="7">
    <source>
    </source>
</evidence>
<evidence type="ECO:0000305" key="8"/>
<evidence type="ECO:0007829" key="9">
    <source>
        <dbReference type="PDB" id="1T8K"/>
    </source>
</evidence>
<evidence type="ECO:0007829" key="10">
    <source>
        <dbReference type="PDB" id="8I8E"/>
    </source>
</evidence>
<name>ACP_ECOLI</name>
<keyword id="KW-0002">3D-structure</keyword>
<keyword id="KW-0963">Cytoplasm</keyword>
<keyword id="KW-0903">Direct protein sequencing</keyword>
<keyword id="KW-0275">Fatty acid biosynthesis</keyword>
<keyword id="KW-0276">Fatty acid metabolism</keyword>
<keyword id="KW-0444">Lipid biosynthesis</keyword>
<keyword id="KW-0443">Lipid metabolism</keyword>
<keyword id="KW-0596">Phosphopantetheine</keyword>
<keyword id="KW-0597">Phosphoprotein</keyword>
<keyword id="KW-1185">Reference proteome</keyword>
<feature type="initiator methionine" description="Removed" evidence="3 5 6">
    <location>
        <position position="1"/>
    </location>
</feature>
<feature type="chain" id="PRO_0000180134" description="Acyl carrier protein">
    <location>
        <begin position="2"/>
        <end position="78"/>
    </location>
</feature>
<feature type="domain" description="Carrier" evidence="2">
    <location>
        <begin position="2"/>
        <end position="77"/>
    </location>
</feature>
<feature type="modified residue" description="O-(pantetheine 4'-phosphoryl)serine" evidence="2 6">
    <location>
        <position position="37"/>
    </location>
</feature>
<feature type="mutagenesis site" description="Loss of phosphopantetheinylation, and inhibition of cell growth." evidence="7">
    <original>S</original>
    <variation>A</variation>
    <variation>T</variation>
    <location>
        <position position="37"/>
    </location>
</feature>
<feature type="sequence conflict" description="In Ref. 6; AA sequence." evidence="8" ref="6">
    <original>N</original>
    <variation>D</variation>
    <location>
        <position position="25"/>
    </location>
</feature>
<feature type="sequence conflict" description="In Ref. 7; AA sequence." evidence="8" ref="7">
    <original>V</original>
    <variation>I</variation>
    <location>
        <position position="44"/>
    </location>
</feature>
<feature type="sequence conflict" description="In Ref. 2; AAB27925." evidence="8" ref="2">
    <original>D</original>
    <variation>V</variation>
    <location>
        <position position="71"/>
    </location>
</feature>
<feature type="sequence conflict" description="In Ref. 2; AAB27925." evidence="8" ref="2">
    <original>H</original>
    <variation>N</variation>
    <location>
        <position position="76"/>
    </location>
</feature>
<feature type="helix" evidence="9">
    <location>
        <begin position="4"/>
        <end position="16"/>
    </location>
</feature>
<feature type="helix" evidence="9">
    <location>
        <begin position="20"/>
        <end position="22"/>
    </location>
</feature>
<feature type="strand" evidence="10">
    <location>
        <begin position="23"/>
        <end position="27"/>
    </location>
</feature>
<feature type="turn" evidence="9">
    <location>
        <begin position="29"/>
        <end position="33"/>
    </location>
</feature>
<feature type="helix" evidence="9">
    <location>
        <begin position="37"/>
        <end position="51"/>
    </location>
</feature>
<feature type="helix" evidence="9">
    <location>
        <begin position="57"/>
        <end position="60"/>
    </location>
</feature>
<feature type="helix" evidence="9">
    <location>
        <begin position="66"/>
        <end position="75"/>
    </location>
</feature>
<accession>P0A6A8</accession>
<accession>P02901</accession>
<accession>Q53352</accession>
<gene>
    <name evidence="1" type="primary">acpP</name>
    <name type="ordered locus">b1094</name>
    <name type="ordered locus">JW1080</name>
</gene>
<dbReference type="EMBL" id="M84991">
    <property type="protein sequence ID" value="AAA23740.1"/>
    <property type="molecule type" value="Genomic_DNA"/>
</dbReference>
<dbReference type="EMBL" id="S65033">
    <property type="protein sequence ID" value="AAB27925.2"/>
    <property type="molecule type" value="Genomic_DNA"/>
</dbReference>
<dbReference type="EMBL" id="U00096">
    <property type="protein sequence ID" value="AAC74178.1"/>
    <property type="molecule type" value="Genomic_DNA"/>
</dbReference>
<dbReference type="EMBL" id="AP009048">
    <property type="protein sequence ID" value="BAA35902.1"/>
    <property type="molecule type" value="Genomic_DNA"/>
</dbReference>
<dbReference type="EMBL" id="Z34979">
    <property type="status" value="NOT_ANNOTATED_CDS"/>
    <property type="molecule type" value="Genomic_DNA"/>
</dbReference>
<dbReference type="PIR" id="C42147">
    <property type="entry name" value="AYEC"/>
</dbReference>
<dbReference type="RefSeq" id="NP_415612.1">
    <property type="nucleotide sequence ID" value="NC_000913.3"/>
</dbReference>
<dbReference type="RefSeq" id="WP_000103754.1">
    <property type="nucleotide sequence ID" value="NZ_STEB01000016.1"/>
</dbReference>
<dbReference type="PDB" id="1ACP">
    <property type="method" value="NMR"/>
    <property type="chains" value="A=2-78"/>
</dbReference>
<dbReference type="PDB" id="1L0H">
    <property type="method" value="X-ray"/>
    <property type="resolution" value="2.00 A"/>
    <property type="chains" value="A=1-77"/>
</dbReference>
<dbReference type="PDB" id="1L0I">
    <property type="method" value="X-ray"/>
    <property type="resolution" value="1.20 A"/>
    <property type="chains" value="A=1-78"/>
</dbReference>
<dbReference type="PDB" id="1T8K">
    <property type="method" value="X-ray"/>
    <property type="resolution" value="1.10 A"/>
    <property type="chains" value="A=2-78"/>
</dbReference>
<dbReference type="PDB" id="2FAC">
    <property type="method" value="X-ray"/>
    <property type="resolution" value="1.76 A"/>
    <property type="chains" value="A/B=2-78"/>
</dbReference>
<dbReference type="PDB" id="2FAD">
    <property type="method" value="X-ray"/>
    <property type="resolution" value="1.60 A"/>
    <property type="chains" value="A/B=2-78"/>
</dbReference>
<dbReference type="PDB" id="2FAE">
    <property type="method" value="X-ray"/>
    <property type="resolution" value="1.55 A"/>
    <property type="chains" value="A/B=2-78"/>
</dbReference>
<dbReference type="PDB" id="2FHS">
    <property type="method" value="X-ray"/>
    <property type="resolution" value="2.70 A"/>
    <property type="chains" value="C=1-78"/>
</dbReference>
<dbReference type="PDB" id="2K92">
    <property type="method" value="NMR"/>
    <property type="chains" value="A=2-78"/>
</dbReference>
<dbReference type="PDB" id="2K93">
    <property type="method" value="NMR"/>
    <property type="chains" value="A=2-78"/>
</dbReference>
<dbReference type="PDB" id="2K94">
    <property type="method" value="NMR"/>
    <property type="chains" value="A=2-78"/>
</dbReference>
<dbReference type="PDB" id="3EJB">
    <property type="method" value="X-ray"/>
    <property type="resolution" value="2.00 A"/>
    <property type="chains" value="A/C/E/G=1-78"/>
</dbReference>
<dbReference type="PDB" id="3EJD">
    <property type="method" value="X-ray"/>
    <property type="resolution" value="2.10 A"/>
    <property type="chains" value="A/C/E/G=1-78"/>
</dbReference>
<dbReference type="PDB" id="3EJE">
    <property type="method" value="X-ray"/>
    <property type="resolution" value="2.10 A"/>
    <property type="chains" value="A/C/E/G=1-78"/>
</dbReference>
<dbReference type="PDB" id="3NY7">
    <property type="method" value="X-ray"/>
    <property type="resolution" value="1.92 A"/>
    <property type="chains" value="B=1-78"/>
</dbReference>
<dbReference type="PDB" id="5KOF">
    <property type="method" value="X-ray"/>
    <property type="resolution" value="2.40 A"/>
    <property type="chains" value="C/D=1-78"/>
</dbReference>
<dbReference type="PDB" id="5USR">
    <property type="method" value="X-ray"/>
    <property type="resolution" value="3.09 A"/>
    <property type="chains" value="I/J/K/L=1-78"/>
</dbReference>
<dbReference type="PDB" id="5VCB">
    <property type="method" value="X-ray"/>
    <property type="resolution" value="4.10 A"/>
    <property type="chains" value="D/E/F/J/K/L/P/Q/R/V/W/X/d/e/f=2-78"/>
</dbReference>
<dbReference type="PDB" id="5WGB">
    <property type="method" value="X-ray"/>
    <property type="resolution" value="2.75 A"/>
    <property type="chains" value="C=2-78"/>
</dbReference>
<dbReference type="PDB" id="5WKP">
    <property type="method" value="X-ray"/>
    <property type="resolution" value="3.15 A"/>
    <property type="chains" value="C/G=2-78"/>
</dbReference>
<dbReference type="PDB" id="5WLW">
    <property type="method" value="X-ray"/>
    <property type="resolution" value="3.32 A"/>
    <property type="chains" value="C/G=2-78"/>
</dbReference>
<dbReference type="PDB" id="6DFL">
    <property type="method" value="X-ray"/>
    <property type="resolution" value="2.40 A"/>
    <property type="chains" value="B=3-74"/>
</dbReference>
<dbReference type="PDB" id="6N3P">
    <property type="method" value="X-ray"/>
    <property type="resolution" value="2.50 A"/>
    <property type="chains" value="G/H/I/J/K/L=2-78"/>
</dbReference>
<dbReference type="PDB" id="6OKC">
    <property type="method" value="X-ray"/>
    <property type="resolution" value="1.55 A"/>
    <property type="chains" value="C/D=1-78"/>
</dbReference>
<dbReference type="PDB" id="6OKF">
    <property type="method" value="X-ray"/>
    <property type="resolution" value="2.50 A"/>
    <property type="chains" value="C/D=1-78"/>
</dbReference>
<dbReference type="PDB" id="6OKG">
    <property type="method" value="X-ray"/>
    <property type="resolution" value="2.30 A"/>
    <property type="chains" value="B=1-78"/>
</dbReference>
<dbReference type="PDB" id="6OLT">
    <property type="method" value="X-ray"/>
    <property type="resolution" value="2.35 A"/>
    <property type="chains" value="B=1-78"/>
</dbReference>
<dbReference type="PDB" id="6U0J">
    <property type="method" value="X-ray"/>
    <property type="resolution" value="1.90 A"/>
    <property type="chains" value="B=1-78"/>
</dbReference>
<dbReference type="PDB" id="6UXE">
    <property type="method" value="X-ray"/>
    <property type="resolution" value="1.57 A"/>
    <property type="chains" value="C=2-78"/>
</dbReference>
<dbReference type="PDB" id="6W1D">
    <property type="method" value="X-ray"/>
    <property type="resolution" value="1.79 A"/>
    <property type="chains" value="C=2-78"/>
</dbReference>
<dbReference type="PDB" id="6W98">
    <property type="method" value="EM"/>
    <property type="resolution" value="2.90 A"/>
    <property type="chains" value="B=1-78"/>
</dbReference>
<dbReference type="PDB" id="6WI2">
    <property type="method" value="X-ray"/>
    <property type="resolution" value="1.95 A"/>
    <property type="chains" value="C=2-78"/>
</dbReference>
<dbReference type="PDB" id="6WIH">
    <property type="method" value="X-ray"/>
    <property type="resolution" value="1.90 A"/>
    <property type="chains" value="C=2-78"/>
</dbReference>
<dbReference type="PDB" id="7L4E">
    <property type="method" value="X-ray"/>
    <property type="resolution" value="2.00 A"/>
    <property type="chains" value="B=1-78"/>
</dbReference>
<dbReference type="PDB" id="7L4L">
    <property type="method" value="X-ray"/>
    <property type="resolution" value="2.65 A"/>
    <property type="chains" value="C/D=1-78"/>
</dbReference>
<dbReference type="PDB" id="7NYW">
    <property type="method" value="EM"/>
    <property type="resolution" value="3.10 A"/>
    <property type="chains" value="G/H=1-78"/>
</dbReference>
<dbReference type="PDB" id="7NYX">
    <property type="method" value="EM"/>
    <property type="resolution" value="4.60 A"/>
    <property type="chains" value="G/H=1-78"/>
</dbReference>
<dbReference type="PDB" id="7NYY">
    <property type="method" value="EM"/>
    <property type="resolution" value="6.80 A"/>
    <property type="chains" value="G/H=1-78"/>
</dbReference>
<dbReference type="PDB" id="7NYZ">
    <property type="method" value="EM"/>
    <property type="resolution" value="6.50 A"/>
    <property type="chains" value="G/H=1-78"/>
</dbReference>
<dbReference type="PDB" id="7NZ0">
    <property type="method" value="EM"/>
    <property type="resolution" value="6.30 A"/>
    <property type="chains" value="G/H=1-78"/>
</dbReference>
<dbReference type="PDB" id="7RTK">
    <property type="method" value="X-ray"/>
    <property type="resolution" value="2.50 A"/>
    <property type="chains" value="C=2-78"/>
</dbReference>
<dbReference type="PDB" id="7SQI">
    <property type="method" value="X-ray"/>
    <property type="resolution" value="1.70 A"/>
    <property type="chains" value="C/D=1-78"/>
</dbReference>
<dbReference type="PDB" id="7SZ9">
    <property type="method" value="X-ray"/>
    <property type="resolution" value="2.20 A"/>
    <property type="chains" value="C/D=2-78"/>
</dbReference>
<dbReference type="PDB" id="8DLE">
    <property type="method" value="X-ray"/>
    <property type="resolution" value="2.30 A"/>
    <property type="chains" value="B=1-78"/>
</dbReference>
<dbReference type="PDB" id="8I8D">
    <property type="method" value="EM"/>
    <property type="resolution" value="2.51 A"/>
    <property type="chains" value="a/b/c/d/e/f=1-78"/>
</dbReference>
<dbReference type="PDB" id="8I8E">
    <property type="method" value="EM"/>
    <property type="resolution" value="2.63 A"/>
    <property type="chains" value="a/b/c/d/e/f=1-78"/>
</dbReference>
<dbReference type="PDB" id="8PK8">
    <property type="method" value="EM"/>
    <property type="resolution" value="2.49 A"/>
    <property type="chains" value="C=1-78"/>
</dbReference>
<dbReference type="PDB" id="8PK9">
    <property type="method" value="EM"/>
    <property type="resolution" value="2.58 A"/>
    <property type="chains" value="C=1-78"/>
</dbReference>
<dbReference type="PDB" id="8PKA">
    <property type="method" value="EM"/>
    <property type="resolution" value="2.75 A"/>
    <property type="chains" value="C=1-78"/>
</dbReference>
<dbReference type="PDB" id="8RMC">
    <property type="method" value="EM"/>
    <property type="resolution" value="2.26 A"/>
    <property type="chains" value="C/G=1-78"/>
</dbReference>
<dbReference type="PDB" id="8RMD">
    <property type="method" value="EM"/>
    <property type="resolution" value="2.52 A"/>
    <property type="chains" value="C/G=1-78"/>
</dbReference>
<dbReference type="PDB" id="8RME">
    <property type="method" value="EM"/>
    <property type="resolution" value="2.49 A"/>
    <property type="chains" value="C/G=1-78"/>
</dbReference>
<dbReference type="PDB" id="8RMF">
    <property type="method" value="EM"/>
    <property type="resolution" value="2.33 A"/>
    <property type="chains" value="C/G=1-78"/>
</dbReference>
<dbReference type="PDB" id="8RMG">
    <property type="method" value="EM"/>
    <property type="resolution" value="2.46 A"/>
    <property type="chains" value="C/G=1-78"/>
</dbReference>
<dbReference type="PDB" id="8TVT">
    <property type="method" value="X-ray"/>
    <property type="resolution" value="2.00 A"/>
    <property type="chains" value="C=2-77"/>
</dbReference>
<dbReference type="PDB" id="9GI2">
    <property type="method" value="EM"/>
    <property type="resolution" value="3.40 A"/>
    <property type="chains" value="A=1-78"/>
</dbReference>
<dbReference type="PDB" id="9GI3">
    <property type="method" value="EM"/>
    <property type="resolution" value="3.50 A"/>
    <property type="chains" value="A=1-78"/>
</dbReference>
<dbReference type="PDBsum" id="1ACP"/>
<dbReference type="PDBsum" id="1L0H"/>
<dbReference type="PDBsum" id="1L0I"/>
<dbReference type="PDBsum" id="1T8K"/>
<dbReference type="PDBsum" id="2FAC"/>
<dbReference type="PDBsum" id="2FAD"/>
<dbReference type="PDBsum" id="2FAE"/>
<dbReference type="PDBsum" id="2FHS"/>
<dbReference type="PDBsum" id="2K92"/>
<dbReference type="PDBsum" id="2K93"/>
<dbReference type="PDBsum" id="2K94"/>
<dbReference type="PDBsum" id="3EJB"/>
<dbReference type="PDBsum" id="3EJD"/>
<dbReference type="PDBsum" id="3EJE"/>
<dbReference type="PDBsum" id="3NY7"/>
<dbReference type="PDBsum" id="5KOF"/>
<dbReference type="PDBsum" id="5USR"/>
<dbReference type="PDBsum" id="5VCB"/>
<dbReference type="PDBsum" id="5WGB"/>
<dbReference type="PDBsum" id="5WKP"/>
<dbReference type="PDBsum" id="5WLW"/>
<dbReference type="PDBsum" id="6DFL"/>
<dbReference type="PDBsum" id="6N3P"/>
<dbReference type="PDBsum" id="6OKC"/>
<dbReference type="PDBsum" id="6OKF"/>
<dbReference type="PDBsum" id="6OKG"/>
<dbReference type="PDBsum" id="6OLT"/>
<dbReference type="PDBsum" id="6U0J"/>
<dbReference type="PDBsum" id="6UXE"/>
<dbReference type="PDBsum" id="6W1D"/>
<dbReference type="PDBsum" id="6W98"/>
<dbReference type="PDBsum" id="6WI2"/>
<dbReference type="PDBsum" id="6WIH"/>
<dbReference type="PDBsum" id="7L4E"/>
<dbReference type="PDBsum" id="7L4L"/>
<dbReference type="PDBsum" id="7NYW"/>
<dbReference type="PDBsum" id="7NYX"/>
<dbReference type="PDBsum" id="7NYY"/>
<dbReference type="PDBsum" id="7NYZ"/>
<dbReference type="PDBsum" id="7NZ0"/>
<dbReference type="PDBsum" id="7RTK"/>
<dbReference type="PDBsum" id="7SQI"/>
<dbReference type="PDBsum" id="7SZ9"/>
<dbReference type="PDBsum" id="8DLE"/>
<dbReference type="PDBsum" id="8I8D"/>
<dbReference type="PDBsum" id="8I8E"/>
<dbReference type="PDBsum" id="8PK8"/>
<dbReference type="PDBsum" id="8PK9"/>
<dbReference type="PDBsum" id="8PKA"/>
<dbReference type="PDBsum" id="8RMC"/>
<dbReference type="PDBsum" id="8RMD"/>
<dbReference type="PDBsum" id="8RME"/>
<dbReference type="PDBsum" id="8RMF"/>
<dbReference type="PDBsum" id="8RMG"/>
<dbReference type="PDBsum" id="8TVT"/>
<dbReference type="PDBsum" id="9GI2"/>
<dbReference type="PDBsum" id="9GI3"/>
<dbReference type="EMDB" id="EMD-12656"/>
<dbReference type="EMDB" id="EMD-12657"/>
<dbReference type="EMDB" id="EMD-12658"/>
<dbReference type="EMDB" id="EMD-12659"/>
<dbReference type="EMDB" id="EMD-12660"/>
<dbReference type="EMDB" id="EMD-17732"/>
<dbReference type="EMDB" id="EMD-17733"/>
<dbReference type="EMDB" id="EMD-17734"/>
<dbReference type="EMDB" id="EMD-19356"/>
<dbReference type="EMDB" id="EMD-19357"/>
<dbReference type="EMDB" id="EMD-19359"/>
<dbReference type="EMDB" id="EMD-19360"/>
<dbReference type="EMDB" id="EMD-19361"/>
<dbReference type="EMDB" id="EMD-21580"/>
<dbReference type="EMDB" id="EMD-51368"/>
<dbReference type="EMDB" id="EMD-51369"/>
<dbReference type="SASBDB" id="P0A6A8"/>
<dbReference type="SMR" id="P0A6A8"/>
<dbReference type="BioGRID" id="4263360">
    <property type="interactions" value="495"/>
</dbReference>
<dbReference type="BioGRID" id="849206">
    <property type="interactions" value="3"/>
</dbReference>
<dbReference type="DIP" id="DIP-29374N"/>
<dbReference type="FunCoup" id="P0A6A8">
    <property type="interactions" value="771"/>
</dbReference>
<dbReference type="IntAct" id="P0A6A8">
    <property type="interactions" value="45"/>
</dbReference>
<dbReference type="STRING" id="511145.b1094"/>
<dbReference type="ChEMBL" id="CHEMBL3309006"/>
<dbReference type="DrugBank" id="DB04450">
    <property type="generic name" value="Heptyl 1-Thiohexopyranoside"/>
</dbReference>
<dbReference type="DrugBank" id="DB08405">
    <property type="generic name" value="S-(2-{[N-(2-HYDROXY-4-{[HYDROXY(OXIDO)PHOSPHINO]OXY}-3,3-DIMETHYLBUTANOYL)-BETA-ALANYL]AMINO}ETHYL) HEPTANETHIOATE"/>
</dbReference>
<dbReference type="DrugBank" id="DB08404">
    <property type="generic name" value="S-(2-{[N-(2-HYDROXY-4-{[HYDROXY(OXIDO)PHOSPHINO]OXY}-3,3-DIMETHYLBUTANOYL)-BETA-ALANYL]AMINO}ETHYL) HEXANETHIOATE"/>
</dbReference>
<dbReference type="jPOST" id="P0A6A8"/>
<dbReference type="PaxDb" id="511145-b1094"/>
<dbReference type="EnsemblBacteria" id="AAC74178">
    <property type="protein sequence ID" value="AAC74178"/>
    <property type="gene ID" value="b1094"/>
</dbReference>
<dbReference type="GeneID" id="944805"/>
<dbReference type="GeneID" id="98387866"/>
<dbReference type="KEGG" id="ecj:JW1080"/>
<dbReference type="KEGG" id="eco:b1094"/>
<dbReference type="KEGG" id="ecoc:C3026_06615"/>
<dbReference type="PATRIC" id="fig|1411691.4.peg.1174"/>
<dbReference type="EchoBASE" id="EB4297"/>
<dbReference type="eggNOG" id="COG0236">
    <property type="taxonomic scope" value="Bacteria"/>
</dbReference>
<dbReference type="HOGENOM" id="CLU_108696_5_1_6"/>
<dbReference type="InParanoid" id="P0A6A8"/>
<dbReference type="OMA" id="TMEASFI"/>
<dbReference type="OrthoDB" id="9804551at2"/>
<dbReference type="PhylomeDB" id="P0A6A8"/>
<dbReference type="BioCyc" id="EcoCyc:EG50003-MONOMER"/>
<dbReference type="BioCyc" id="MetaCyc:EG50003-MONOMER"/>
<dbReference type="UniPathway" id="UPA00094"/>
<dbReference type="EvolutionaryTrace" id="P0A6A8"/>
<dbReference type="PRO" id="PR:P0A6A8"/>
<dbReference type="Proteomes" id="UP000000625">
    <property type="component" value="Chromosome"/>
</dbReference>
<dbReference type="GO" id="GO:0005737">
    <property type="term" value="C:cytoplasm"/>
    <property type="evidence" value="ECO:0000314"/>
    <property type="project" value="EcoliWiki"/>
</dbReference>
<dbReference type="GO" id="GO:0005829">
    <property type="term" value="C:cytosol"/>
    <property type="evidence" value="ECO:0000314"/>
    <property type="project" value="EcoCyc"/>
</dbReference>
<dbReference type="GO" id="GO:0016020">
    <property type="term" value="C:membrane"/>
    <property type="evidence" value="ECO:0007669"/>
    <property type="project" value="GOC"/>
</dbReference>
<dbReference type="GO" id="GO:0000035">
    <property type="term" value="F:acyl binding"/>
    <property type="evidence" value="ECO:0000314"/>
    <property type="project" value="EcoliWiki"/>
</dbReference>
<dbReference type="GO" id="GO:0000036">
    <property type="term" value="F:acyl carrier activity"/>
    <property type="evidence" value="ECO:0000314"/>
    <property type="project" value="EcoliWiki"/>
</dbReference>
<dbReference type="GO" id="GO:0008289">
    <property type="term" value="F:lipid binding"/>
    <property type="evidence" value="ECO:0000315"/>
    <property type="project" value="CAFA"/>
</dbReference>
<dbReference type="GO" id="GO:0031177">
    <property type="term" value="F:phosphopantetheine binding"/>
    <property type="evidence" value="ECO:0000315"/>
    <property type="project" value="EcoliWiki"/>
</dbReference>
<dbReference type="GO" id="GO:0006633">
    <property type="term" value="P:fatty acid biosynthetic process"/>
    <property type="evidence" value="ECO:0000315"/>
    <property type="project" value="EcoliWiki"/>
</dbReference>
<dbReference type="GO" id="GO:0009245">
    <property type="term" value="P:lipid A biosynthetic process"/>
    <property type="evidence" value="ECO:0000315"/>
    <property type="project" value="EcoliWiki"/>
</dbReference>
<dbReference type="GO" id="GO:0008610">
    <property type="term" value="P:lipid biosynthetic process"/>
    <property type="evidence" value="ECO:0000315"/>
    <property type="project" value="EcoliWiki"/>
</dbReference>
<dbReference type="GO" id="GO:0009410">
    <property type="term" value="P:response to xenobiotic stimulus"/>
    <property type="evidence" value="ECO:0000315"/>
    <property type="project" value="EcoliWiki"/>
</dbReference>
<dbReference type="FunFam" id="1.10.1200.10:FF:000001">
    <property type="entry name" value="Acyl carrier protein"/>
    <property type="match status" value="1"/>
</dbReference>
<dbReference type="Gene3D" id="1.10.1200.10">
    <property type="entry name" value="ACP-like"/>
    <property type="match status" value="1"/>
</dbReference>
<dbReference type="HAMAP" id="MF_01217">
    <property type="entry name" value="Acyl_carrier"/>
    <property type="match status" value="1"/>
</dbReference>
<dbReference type="InterPro" id="IPR003231">
    <property type="entry name" value="ACP"/>
</dbReference>
<dbReference type="InterPro" id="IPR036736">
    <property type="entry name" value="ACP-like_sf"/>
</dbReference>
<dbReference type="InterPro" id="IPR009081">
    <property type="entry name" value="PP-bd_ACP"/>
</dbReference>
<dbReference type="InterPro" id="IPR006162">
    <property type="entry name" value="Ppantetheine_attach_site"/>
</dbReference>
<dbReference type="NCBIfam" id="TIGR00517">
    <property type="entry name" value="acyl_carrier"/>
    <property type="match status" value="1"/>
</dbReference>
<dbReference type="NCBIfam" id="NF002148">
    <property type="entry name" value="PRK00982.1-2"/>
    <property type="match status" value="1"/>
</dbReference>
<dbReference type="NCBIfam" id="NF002149">
    <property type="entry name" value="PRK00982.1-3"/>
    <property type="match status" value="1"/>
</dbReference>
<dbReference type="NCBIfam" id="NF002150">
    <property type="entry name" value="PRK00982.1-4"/>
    <property type="match status" value="1"/>
</dbReference>
<dbReference type="NCBIfam" id="NF002151">
    <property type="entry name" value="PRK00982.1-5"/>
    <property type="match status" value="1"/>
</dbReference>
<dbReference type="PANTHER" id="PTHR20863">
    <property type="entry name" value="ACYL CARRIER PROTEIN"/>
    <property type="match status" value="1"/>
</dbReference>
<dbReference type="PANTHER" id="PTHR20863:SF76">
    <property type="entry name" value="CARRIER DOMAIN-CONTAINING PROTEIN"/>
    <property type="match status" value="1"/>
</dbReference>
<dbReference type="Pfam" id="PF00550">
    <property type="entry name" value="PP-binding"/>
    <property type="match status" value="1"/>
</dbReference>
<dbReference type="SUPFAM" id="SSF47336">
    <property type="entry name" value="ACP-like"/>
    <property type="match status" value="1"/>
</dbReference>
<dbReference type="PROSITE" id="PS50075">
    <property type="entry name" value="CARRIER"/>
    <property type="match status" value="1"/>
</dbReference>
<dbReference type="PROSITE" id="PS00012">
    <property type="entry name" value="PHOSPHOPANTETHEINE"/>
    <property type="match status" value="1"/>
</dbReference>
<sequence length="78" mass="8640">MSTIEERVKKIIGEQLGVKQEEVTNNASFVEDLGADSLDTVELVMALEEEFDTEIPDEEAEKITTVQAAIDYINGHQA</sequence>
<comment type="function">
    <text>Carrier of the growing fatty acid chain in fatty acid biosynthesis.</text>
</comment>
<comment type="pathway">
    <text evidence="1">Lipid metabolism; fatty acid biosynthesis.</text>
</comment>
<comment type="subunit">
    <text evidence="4">Interacts with MukB.</text>
</comment>
<comment type="interaction">
    <interactant intactId="EBI-542566">
        <id>P0A6A8</id>
    </interactant>
    <interactant intactId="EBI-1132260">
        <id>P13001</id>
        <label>bioH</label>
    </interactant>
    <organismsDiffer>false</organismsDiffer>
    <experiments>3</experiments>
</comment>
<comment type="interaction">
    <interactant intactId="EBI-542566">
        <id>P0A6A8</id>
    </interactant>
    <interactant intactId="EBI-542961">
        <id>P0A7A7</id>
        <label>plsB</label>
    </interactant>
    <organismsDiffer>false</organismsDiffer>
    <experiments>3</experiments>
</comment>
<comment type="interaction">
    <interactant intactId="EBI-542566">
        <id>P0A6A8</id>
    </interactant>
    <interactant intactId="EBI-543228">
        <id>P0AG24</id>
        <label>spoT</label>
    </interactant>
    <organismsDiffer>false</organismsDiffer>
    <experiments>6</experiments>
</comment>
<comment type="interaction">
    <interactant intactId="EBI-542566">
        <id>P0A6A8</id>
    </interactant>
    <interactant intactId="EBI-543276">
        <id>P0A8Z3</id>
        <label>ybgC</label>
    </interactant>
    <organismsDiffer>false</organismsDiffer>
    <experiments>7</experiments>
</comment>
<comment type="subcellular location">
    <subcellularLocation>
        <location>Cytoplasm</location>
    </subcellularLocation>
</comment>
<comment type="PTM">
    <text>4'-phosphopantetheine is transferred from CoA to a specific serine of apo-ACP by AcpS. This modification is essential for activity because fatty acids are bound in thioester linkage to the sulfhydryl of the prosthetic group.</text>
</comment>
<comment type="similarity">
    <text evidence="1">Belongs to the acyl carrier protein (ACP) family.</text>
</comment>